<dbReference type="EMBL" id="AC022016">
    <property type="status" value="NOT_ANNOTATED_CDS"/>
    <property type="molecule type" value="Genomic_DNA"/>
</dbReference>
<dbReference type="RefSeq" id="NP_001420649.1">
    <property type="nucleotide sequence ID" value="NM_001433720.1"/>
</dbReference>
<dbReference type="SMR" id="C0HLV8"/>
<dbReference type="FunCoup" id="C0HLV8">
    <property type="interactions" value="279"/>
</dbReference>
<dbReference type="Ensembl" id="ENST00000692337.1">
    <property type="protein sequence ID" value="ENSP00000509326.1"/>
    <property type="gene ID" value="ENSG00000289051.1"/>
</dbReference>
<dbReference type="GeneID" id="133834869"/>
<dbReference type="AGR" id="HGNC:55481"/>
<dbReference type="GeneCards" id="MLDHR"/>
<dbReference type="HGNC" id="HGNC:55481">
    <property type="gene designation" value="MLDHR"/>
</dbReference>
<dbReference type="HPA" id="ENSG00000289051">
    <property type="expression patterns" value="Not detected"/>
</dbReference>
<dbReference type="MIM" id="620760">
    <property type="type" value="gene"/>
</dbReference>
<dbReference type="neXtProt" id="NX_C0HLV8"/>
<dbReference type="InParanoid" id="C0HLV8"/>
<dbReference type="Proteomes" id="UP000005640">
    <property type="component" value="Chromosome 10"/>
</dbReference>
<dbReference type="GO" id="GO:0005739">
    <property type="term" value="C:mitochondrion"/>
    <property type="evidence" value="ECO:0000314"/>
    <property type="project" value="UniProtKB"/>
</dbReference>
<dbReference type="GO" id="GO:0160193">
    <property type="term" value="F:L-lactate dehydrogenase inhibitor activity"/>
    <property type="evidence" value="ECO:0000314"/>
    <property type="project" value="UniProtKB"/>
</dbReference>
<dbReference type="GO" id="GO:0090324">
    <property type="term" value="P:negative regulation of oxidative phosphorylation"/>
    <property type="evidence" value="ECO:0000315"/>
    <property type="project" value="UniProtKB"/>
</dbReference>
<dbReference type="InterPro" id="IPR054159">
    <property type="entry name" value="MP31"/>
</dbReference>
<dbReference type="Pfam" id="PF22001">
    <property type="entry name" value="MP31"/>
    <property type="match status" value="1"/>
</dbReference>
<feature type="chain" id="PRO_0000453000" description="PTEN upstream open reading frame MP31">
    <location>
        <begin position="1"/>
        <end position="31"/>
    </location>
</feature>
<feature type="mutagenesis site" description="Abolishes interaction with LDHA and LDHB." evidence="1">
    <original>S</original>
    <variation>A</variation>
    <location>
        <position position="5"/>
    </location>
</feature>
<feature type="mutagenesis site" description="Abolishes interaction with LDHA and LDHB." evidence="1">
    <original>Y</original>
    <variation>A</variation>
    <location>
        <position position="12"/>
    </location>
</feature>
<comment type="function">
    <text evidence="1">Inhibits lactate dehydrogenase (LDH)-mediated conversion of lactate to pyruvate in mitochondria by competing with mitochondrial LDH for binding to NAD(+) (PubMed:33406399). Also inhibits cellular lactate utilization (PubMed:33406399).</text>
</comment>
<comment type="subunit">
    <text evidence="1">Interacts with lactate dehydrogenases LDHA and LDHB; interaction with mitochondrial LDH leads to inhibition of lactate dehydrogenase activity, preventing conversion of lactate to pyruvate.</text>
</comment>
<comment type="subcellular location">
    <subcellularLocation>
        <location evidence="1">Mitochondrion</location>
    </subcellularLocation>
</comment>
<comment type="tissue specificity">
    <text evidence="1">Expressed in brain (at protein level) (PubMed:33406399). Expressed at lower levels in glioblastomas than in normal brain tissue (at protein level) (PubMed:33406399).</text>
</comment>
<comment type="pharmaceutical">
    <text evidence="1">Recombinant MP31 administered intraperitoneally penetrates the blood-brain barrier and inhibits mice glioblastoma xenografts without neurological toxicity, suggesting a potential role in gliobastoma treatment.</text>
</comment>
<protein>
    <recommendedName>
        <fullName evidence="3">PTEN upstream open reading frame MP31</fullName>
    </recommendedName>
    <alternativeName>
        <fullName evidence="2">Micropeptide 31</fullName>
    </alternativeName>
    <alternativeName>
        <fullName>Mitochondrial lactate dehydrogenase regulator</fullName>
    </alternativeName>
</protein>
<name>MP31_HUMAN</name>
<evidence type="ECO:0000269" key="1">
    <source>
    </source>
</evidence>
<evidence type="ECO:0000303" key="2">
    <source>
    </source>
</evidence>
<evidence type="ECO:0000305" key="3"/>
<evidence type="ECO:0000312" key="4">
    <source>
        <dbReference type="HGNC" id="HGNC:55481"/>
    </source>
</evidence>
<gene>
    <name evidence="4" type="primary">MLDHR</name>
    <name evidence="2" type="synonym">MP31</name>
</gene>
<proteinExistence type="evidence at protein level"/>
<accession>C0HLV8</accession>
<reference evidence="3" key="1">
    <citation type="journal article" date="2004" name="Nature">
        <title>The DNA sequence and comparative analysis of human chromosome 10.</title>
        <authorList>
            <person name="Deloukas P."/>
            <person name="Earthrowl M.E."/>
            <person name="Grafham D.V."/>
            <person name="Rubenfield M."/>
            <person name="French L."/>
            <person name="Steward C.A."/>
            <person name="Sims S.K."/>
            <person name="Jones M.C."/>
            <person name="Searle S."/>
            <person name="Scott C."/>
            <person name="Howe K."/>
            <person name="Hunt S.E."/>
            <person name="Andrews T.D."/>
            <person name="Gilbert J.G.R."/>
            <person name="Swarbreck D."/>
            <person name="Ashurst J.L."/>
            <person name="Taylor A."/>
            <person name="Battles J."/>
            <person name="Bird C.P."/>
            <person name="Ainscough R."/>
            <person name="Almeida J.P."/>
            <person name="Ashwell R.I.S."/>
            <person name="Ambrose K.D."/>
            <person name="Babbage A.K."/>
            <person name="Bagguley C.L."/>
            <person name="Bailey J."/>
            <person name="Banerjee R."/>
            <person name="Bates K."/>
            <person name="Beasley H."/>
            <person name="Bray-Allen S."/>
            <person name="Brown A.J."/>
            <person name="Brown J.Y."/>
            <person name="Burford D.C."/>
            <person name="Burrill W."/>
            <person name="Burton J."/>
            <person name="Cahill P."/>
            <person name="Camire D."/>
            <person name="Carter N.P."/>
            <person name="Chapman J.C."/>
            <person name="Clark S.Y."/>
            <person name="Clarke G."/>
            <person name="Clee C.M."/>
            <person name="Clegg S."/>
            <person name="Corby N."/>
            <person name="Coulson A."/>
            <person name="Dhami P."/>
            <person name="Dutta I."/>
            <person name="Dunn M."/>
            <person name="Faulkner L."/>
            <person name="Frankish A."/>
            <person name="Frankland J.A."/>
            <person name="Garner P."/>
            <person name="Garnett J."/>
            <person name="Gribble S."/>
            <person name="Griffiths C."/>
            <person name="Grocock R."/>
            <person name="Gustafson E."/>
            <person name="Hammond S."/>
            <person name="Harley J.L."/>
            <person name="Hart E."/>
            <person name="Heath P.D."/>
            <person name="Ho T.P."/>
            <person name="Hopkins B."/>
            <person name="Horne J."/>
            <person name="Howden P.J."/>
            <person name="Huckle E."/>
            <person name="Hynds C."/>
            <person name="Johnson C."/>
            <person name="Johnson D."/>
            <person name="Kana A."/>
            <person name="Kay M."/>
            <person name="Kimberley A.M."/>
            <person name="Kershaw J.K."/>
            <person name="Kokkinaki M."/>
            <person name="Laird G.K."/>
            <person name="Lawlor S."/>
            <person name="Lee H.M."/>
            <person name="Leongamornlert D.A."/>
            <person name="Laird G."/>
            <person name="Lloyd C."/>
            <person name="Lloyd D.M."/>
            <person name="Loveland J."/>
            <person name="Lovell J."/>
            <person name="McLaren S."/>
            <person name="McLay K.E."/>
            <person name="McMurray A."/>
            <person name="Mashreghi-Mohammadi M."/>
            <person name="Matthews L."/>
            <person name="Milne S."/>
            <person name="Nickerson T."/>
            <person name="Nguyen M."/>
            <person name="Overton-Larty E."/>
            <person name="Palmer S.A."/>
            <person name="Pearce A.V."/>
            <person name="Peck A.I."/>
            <person name="Pelan S."/>
            <person name="Phillimore B."/>
            <person name="Porter K."/>
            <person name="Rice C.M."/>
            <person name="Rogosin A."/>
            <person name="Ross M.T."/>
            <person name="Sarafidou T."/>
            <person name="Sehra H.K."/>
            <person name="Shownkeen R."/>
            <person name="Skuce C.D."/>
            <person name="Smith M."/>
            <person name="Standring L."/>
            <person name="Sycamore N."/>
            <person name="Tester J."/>
            <person name="Thorpe A."/>
            <person name="Torcasso W."/>
            <person name="Tracey A."/>
            <person name="Tromans A."/>
            <person name="Tsolas J."/>
            <person name="Wall M."/>
            <person name="Walsh J."/>
            <person name="Wang H."/>
            <person name="Weinstock K."/>
            <person name="West A.P."/>
            <person name="Willey D.L."/>
            <person name="Whitehead S.L."/>
            <person name="Wilming L."/>
            <person name="Wray P.W."/>
            <person name="Young L."/>
            <person name="Chen Y."/>
            <person name="Lovering R.C."/>
            <person name="Moschonas N.K."/>
            <person name="Siebert R."/>
            <person name="Fechtel K."/>
            <person name="Bentley D."/>
            <person name="Durbin R.M."/>
            <person name="Hubbard T."/>
            <person name="Doucette-Stamm L."/>
            <person name="Beck S."/>
            <person name="Smith D.R."/>
            <person name="Rogers J."/>
        </authorList>
    </citation>
    <scope>NUCLEOTIDE SEQUENCE [LARGE SCALE GENOMIC DNA]</scope>
</reference>
<reference evidence="3" key="2">
    <citation type="journal article" date="2021" name="Cell Metab.">
        <title>An Upstream Open Reading Frame in Phosphatase and Tensin Homolog Encodes a Circuit Breaker of Lactate Metabolism.</title>
        <authorList>
            <person name="Huang N."/>
            <person name="Li F."/>
            <person name="Zhang M."/>
            <person name="Zhou H."/>
            <person name="Chen Z."/>
            <person name="Ma X."/>
            <person name="Yang L."/>
            <person name="Wu X."/>
            <person name="Zhong J."/>
            <person name="Xiao F."/>
            <person name="Yang X."/>
            <person name="Zhao K."/>
            <person name="Li X."/>
            <person name="Xia X."/>
            <person name="Liu Z."/>
            <person name="Gao S."/>
            <person name="Zhang N."/>
        </authorList>
    </citation>
    <scope>PROTEIN SEQUENCE OF 4-19</scope>
    <scope>IDENTIFICATION BY MASS SPECTROMETRY</scope>
    <scope>FUNCTION</scope>
    <scope>INTERACTION WITH LDHA AND LDHB</scope>
    <scope>SUBCELLULAR LOCATION</scope>
    <scope>TISSUE SPECIFICITY</scope>
    <scope>PHARMACEUTICAL</scope>
    <scope>MUTAGENESIS OF SER-5 AND TYR-12</scope>
</reference>
<reference evidence="3" key="3">
    <citation type="journal article" date="2021" name="Cell Metab.">
        <authorList>
            <person name="Huang N."/>
            <person name="Li F."/>
            <person name="Zhang M."/>
            <person name="Zhou H."/>
            <person name="Chen Z."/>
            <person name="Ma X."/>
            <person name="Yang L."/>
            <person name="Wu X."/>
            <person name="Zhong J."/>
            <person name="Xiao F."/>
            <person name="Yang X."/>
            <person name="Zhao K."/>
            <person name="Li X."/>
            <person name="Xia X."/>
            <person name="Liu Z."/>
            <person name="Gao S."/>
            <person name="Zhang N."/>
        </authorList>
    </citation>
    <scope>ERRATUM OF PUBMED:33406399</scope>
</reference>
<keyword id="KW-0903">Direct protein sequencing</keyword>
<keyword id="KW-0496">Mitochondrion</keyword>
<keyword id="KW-0582">Pharmaceutical</keyword>
<keyword id="KW-1185">Reference proteome</keyword>
<sequence length="31" mass="3336">MWRDSLCAAAGYALGAGTRLRSVLSSRKLQP</sequence>
<organism>
    <name type="scientific">Homo sapiens</name>
    <name type="common">Human</name>
    <dbReference type="NCBI Taxonomy" id="9606"/>
    <lineage>
        <taxon>Eukaryota</taxon>
        <taxon>Metazoa</taxon>
        <taxon>Chordata</taxon>
        <taxon>Craniata</taxon>
        <taxon>Vertebrata</taxon>
        <taxon>Euteleostomi</taxon>
        <taxon>Mammalia</taxon>
        <taxon>Eutheria</taxon>
        <taxon>Euarchontoglires</taxon>
        <taxon>Primates</taxon>
        <taxon>Haplorrhini</taxon>
        <taxon>Catarrhini</taxon>
        <taxon>Hominidae</taxon>
        <taxon>Homo</taxon>
    </lineage>
</organism>